<feature type="chain" id="PRO_1000098170" description="6,7-dimethyl-8-ribityllumazine synthase">
    <location>
        <begin position="1"/>
        <end position="155"/>
    </location>
</feature>
<feature type="active site" description="Proton donor" evidence="1">
    <location>
        <position position="90"/>
    </location>
</feature>
<feature type="binding site" evidence="1">
    <location>
        <position position="24"/>
    </location>
    <ligand>
        <name>5-amino-6-(D-ribitylamino)uracil</name>
        <dbReference type="ChEBI" id="CHEBI:15934"/>
    </ligand>
</feature>
<feature type="binding site" evidence="1">
    <location>
        <begin position="58"/>
        <end position="60"/>
    </location>
    <ligand>
        <name>5-amino-6-(D-ribitylamino)uracil</name>
        <dbReference type="ChEBI" id="CHEBI:15934"/>
    </ligand>
</feature>
<feature type="binding site" evidence="1">
    <location>
        <begin position="82"/>
        <end position="84"/>
    </location>
    <ligand>
        <name>5-amino-6-(D-ribitylamino)uracil</name>
        <dbReference type="ChEBI" id="CHEBI:15934"/>
    </ligand>
</feature>
<feature type="binding site" evidence="1">
    <location>
        <begin position="87"/>
        <end position="88"/>
    </location>
    <ligand>
        <name>(2S)-2-hydroxy-3-oxobutyl phosphate</name>
        <dbReference type="ChEBI" id="CHEBI:58830"/>
    </ligand>
</feature>
<feature type="binding site" evidence="1">
    <location>
        <position position="115"/>
    </location>
    <ligand>
        <name>5-amino-6-(D-ribitylamino)uracil</name>
        <dbReference type="ChEBI" id="CHEBI:15934"/>
    </ligand>
</feature>
<feature type="binding site" evidence="1">
    <location>
        <position position="129"/>
    </location>
    <ligand>
        <name>(2S)-2-hydroxy-3-oxobutyl phosphate</name>
        <dbReference type="ChEBI" id="CHEBI:58830"/>
    </ligand>
</feature>
<dbReference type="EC" id="2.5.1.78" evidence="1"/>
<dbReference type="EMBL" id="CP001097">
    <property type="protein sequence ID" value="ACD91359.1"/>
    <property type="molecule type" value="Genomic_DNA"/>
</dbReference>
<dbReference type="RefSeq" id="WP_012467224.1">
    <property type="nucleotide sequence ID" value="NC_010803.1"/>
</dbReference>
<dbReference type="SMR" id="B3EHV0"/>
<dbReference type="STRING" id="290315.Clim_2336"/>
<dbReference type="KEGG" id="cli:Clim_2336"/>
<dbReference type="eggNOG" id="COG0054">
    <property type="taxonomic scope" value="Bacteria"/>
</dbReference>
<dbReference type="HOGENOM" id="CLU_089358_1_1_10"/>
<dbReference type="OrthoDB" id="9809709at2"/>
<dbReference type="UniPathway" id="UPA00275">
    <property type="reaction ID" value="UER00404"/>
</dbReference>
<dbReference type="Proteomes" id="UP000008841">
    <property type="component" value="Chromosome"/>
</dbReference>
<dbReference type="GO" id="GO:0005829">
    <property type="term" value="C:cytosol"/>
    <property type="evidence" value="ECO:0007669"/>
    <property type="project" value="TreeGrafter"/>
</dbReference>
<dbReference type="GO" id="GO:0009349">
    <property type="term" value="C:riboflavin synthase complex"/>
    <property type="evidence" value="ECO:0007669"/>
    <property type="project" value="InterPro"/>
</dbReference>
<dbReference type="GO" id="GO:0000906">
    <property type="term" value="F:6,7-dimethyl-8-ribityllumazine synthase activity"/>
    <property type="evidence" value="ECO:0007669"/>
    <property type="project" value="UniProtKB-UniRule"/>
</dbReference>
<dbReference type="GO" id="GO:0009231">
    <property type="term" value="P:riboflavin biosynthetic process"/>
    <property type="evidence" value="ECO:0007669"/>
    <property type="project" value="UniProtKB-UniRule"/>
</dbReference>
<dbReference type="CDD" id="cd09209">
    <property type="entry name" value="Lumazine_synthase-I"/>
    <property type="match status" value="1"/>
</dbReference>
<dbReference type="FunFam" id="3.40.50.960:FF:000001">
    <property type="entry name" value="6,7-dimethyl-8-ribityllumazine synthase"/>
    <property type="match status" value="1"/>
</dbReference>
<dbReference type="Gene3D" id="3.40.50.960">
    <property type="entry name" value="Lumazine/riboflavin synthase"/>
    <property type="match status" value="1"/>
</dbReference>
<dbReference type="HAMAP" id="MF_00178">
    <property type="entry name" value="Lumazine_synth"/>
    <property type="match status" value="1"/>
</dbReference>
<dbReference type="InterPro" id="IPR034964">
    <property type="entry name" value="LS"/>
</dbReference>
<dbReference type="InterPro" id="IPR002180">
    <property type="entry name" value="LS/RS"/>
</dbReference>
<dbReference type="InterPro" id="IPR036467">
    <property type="entry name" value="LS/RS_sf"/>
</dbReference>
<dbReference type="NCBIfam" id="TIGR00114">
    <property type="entry name" value="lumazine-synth"/>
    <property type="match status" value="1"/>
</dbReference>
<dbReference type="NCBIfam" id="NF000812">
    <property type="entry name" value="PRK00061.1-4"/>
    <property type="match status" value="1"/>
</dbReference>
<dbReference type="PANTHER" id="PTHR21058:SF0">
    <property type="entry name" value="6,7-DIMETHYL-8-RIBITYLLUMAZINE SYNTHASE"/>
    <property type="match status" value="1"/>
</dbReference>
<dbReference type="PANTHER" id="PTHR21058">
    <property type="entry name" value="6,7-DIMETHYL-8-RIBITYLLUMAZINE SYNTHASE DMRL SYNTHASE LUMAZINE SYNTHASE"/>
    <property type="match status" value="1"/>
</dbReference>
<dbReference type="Pfam" id="PF00885">
    <property type="entry name" value="DMRL_synthase"/>
    <property type="match status" value="1"/>
</dbReference>
<dbReference type="SUPFAM" id="SSF52121">
    <property type="entry name" value="Lumazine synthase"/>
    <property type="match status" value="1"/>
</dbReference>
<evidence type="ECO:0000255" key="1">
    <source>
        <dbReference type="HAMAP-Rule" id="MF_00178"/>
    </source>
</evidence>
<organism>
    <name type="scientific">Chlorobium limicola (strain DSM 245 / NBRC 103803 / 6330)</name>
    <dbReference type="NCBI Taxonomy" id="290315"/>
    <lineage>
        <taxon>Bacteria</taxon>
        <taxon>Pseudomonadati</taxon>
        <taxon>Chlorobiota</taxon>
        <taxon>Chlorobiia</taxon>
        <taxon>Chlorobiales</taxon>
        <taxon>Chlorobiaceae</taxon>
        <taxon>Chlorobium/Pelodictyon group</taxon>
        <taxon>Chlorobium</taxon>
    </lineage>
</organism>
<name>RISB_CHLL2</name>
<gene>
    <name evidence="1" type="primary">ribH</name>
    <name type="ordered locus">Clim_2336</name>
</gene>
<comment type="function">
    <text evidence="1">Catalyzes the formation of 6,7-dimethyl-8-ribityllumazine by condensation of 5-amino-6-(D-ribitylamino)uracil with 3,4-dihydroxy-2-butanone 4-phosphate. This is the penultimate step in the biosynthesis of riboflavin.</text>
</comment>
<comment type="catalytic activity">
    <reaction evidence="1">
        <text>(2S)-2-hydroxy-3-oxobutyl phosphate + 5-amino-6-(D-ribitylamino)uracil = 6,7-dimethyl-8-(1-D-ribityl)lumazine + phosphate + 2 H2O + H(+)</text>
        <dbReference type="Rhea" id="RHEA:26152"/>
        <dbReference type="ChEBI" id="CHEBI:15377"/>
        <dbReference type="ChEBI" id="CHEBI:15378"/>
        <dbReference type="ChEBI" id="CHEBI:15934"/>
        <dbReference type="ChEBI" id="CHEBI:43474"/>
        <dbReference type="ChEBI" id="CHEBI:58201"/>
        <dbReference type="ChEBI" id="CHEBI:58830"/>
        <dbReference type="EC" id="2.5.1.78"/>
    </reaction>
</comment>
<comment type="pathway">
    <text evidence="1">Cofactor biosynthesis; riboflavin biosynthesis; riboflavin from 2-hydroxy-3-oxobutyl phosphate and 5-amino-6-(D-ribitylamino)uracil: step 1/2.</text>
</comment>
<comment type="similarity">
    <text evidence="1">Belongs to the DMRL synthase family.</text>
</comment>
<keyword id="KW-0686">Riboflavin biosynthesis</keyword>
<keyword id="KW-0808">Transferase</keyword>
<accession>B3EHV0</accession>
<reference key="1">
    <citation type="submission" date="2008-05" db="EMBL/GenBank/DDBJ databases">
        <title>Complete sequence of Chlorobium limicola DSM 245.</title>
        <authorList>
            <consortium name="US DOE Joint Genome Institute"/>
            <person name="Lucas S."/>
            <person name="Copeland A."/>
            <person name="Lapidus A."/>
            <person name="Glavina del Rio T."/>
            <person name="Dalin E."/>
            <person name="Tice H."/>
            <person name="Bruce D."/>
            <person name="Goodwin L."/>
            <person name="Pitluck S."/>
            <person name="Schmutz J."/>
            <person name="Larimer F."/>
            <person name="Land M."/>
            <person name="Hauser L."/>
            <person name="Kyrpides N."/>
            <person name="Ovchinnikova G."/>
            <person name="Zhao F."/>
            <person name="Li T."/>
            <person name="Liu Z."/>
            <person name="Overmann J."/>
            <person name="Bryant D.A."/>
            <person name="Richardson P."/>
        </authorList>
    </citation>
    <scope>NUCLEOTIDE SEQUENCE [LARGE SCALE GENOMIC DNA]</scope>
    <source>
        <strain>DSM 245 / NBRC 103803 / 6330</strain>
    </source>
</reference>
<protein>
    <recommendedName>
        <fullName evidence="1">6,7-dimethyl-8-ribityllumazine synthase</fullName>
        <shortName evidence="1">DMRL synthase</shortName>
        <shortName evidence="1">LS</shortName>
        <shortName evidence="1">Lumazine synthase</shortName>
        <ecNumber evidence="1">2.5.1.78</ecNumber>
    </recommendedName>
</protein>
<proteinExistence type="inferred from homology"/>
<sequence>MQIKQIEGSLSAKDIRFALVVSRFNDFIGQKLVEGAIDCILRHGGSEEQITVYRCPGAFELPMVAKKVAMSGSADAVIALGVIIRGSTPHFDVIAAEATKGIAQVSLDTMIPVSFGVLTTENLEQAIERAGTKAGNKGFDAAMTAMEMVNLYRQF</sequence>